<feature type="transit peptide" description="Mitochondrion" evidence="1">
    <location>
        <begin position="1"/>
        <end position="29"/>
    </location>
</feature>
<feature type="chain" id="PRO_0000398272" description="Lipoyl synthase, mitochondrial">
    <location>
        <begin position="30"/>
        <end position="410"/>
    </location>
</feature>
<feature type="domain" description="Radical SAM core" evidence="2">
    <location>
        <begin position="143"/>
        <end position="364"/>
    </location>
</feature>
<feature type="region of interest" description="Disordered" evidence="3">
    <location>
        <begin position="29"/>
        <end position="49"/>
    </location>
</feature>
<feature type="compositionally biased region" description="Polar residues" evidence="3">
    <location>
        <begin position="29"/>
        <end position="39"/>
    </location>
</feature>
<feature type="binding site" evidence="1">
    <location>
        <position position="129"/>
    </location>
    <ligand>
        <name>[4Fe-4S] cluster</name>
        <dbReference type="ChEBI" id="CHEBI:49883"/>
        <label>1</label>
    </ligand>
</feature>
<feature type="binding site" evidence="1">
    <location>
        <position position="134"/>
    </location>
    <ligand>
        <name>[4Fe-4S] cluster</name>
        <dbReference type="ChEBI" id="CHEBI:49883"/>
        <label>1</label>
    </ligand>
</feature>
<feature type="binding site" evidence="1">
    <location>
        <position position="140"/>
    </location>
    <ligand>
        <name>[4Fe-4S] cluster</name>
        <dbReference type="ChEBI" id="CHEBI:49883"/>
        <label>1</label>
    </ligand>
</feature>
<feature type="binding site" evidence="1">
    <location>
        <position position="160"/>
    </location>
    <ligand>
        <name>[4Fe-4S] cluster</name>
        <dbReference type="ChEBI" id="CHEBI:49883"/>
        <label>2</label>
        <note>4Fe-4S-S-AdoMet</note>
    </ligand>
</feature>
<feature type="binding site" evidence="1">
    <location>
        <position position="164"/>
    </location>
    <ligand>
        <name>[4Fe-4S] cluster</name>
        <dbReference type="ChEBI" id="CHEBI:49883"/>
        <label>2</label>
        <note>4Fe-4S-S-AdoMet</note>
    </ligand>
</feature>
<feature type="binding site" evidence="1">
    <location>
        <position position="167"/>
    </location>
    <ligand>
        <name>[4Fe-4S] cluster</name>
        <dbReference type="ChEBI" id="CHEBI:49883"/>
        <label>2</label>
        <note>4Fe-4S-S-AdoMet</note>
    </ligand>
</feature>
<feature type="binding site" evidence="1">
    <location>
        <position position="375"/>
    </location>
    <ligand>
        <name>[4Fe-4S] cluster</name>
        <dbReference type="ChEBI" id="CHEBI:49883"/>
        <label>1</label>
    </ligand>
</feature>
<keyword id="KW-0004">4Fe-4S</keyword>
<keyword id="KW-0408">Iron</keyword>
<keyword id="KW-0411">Iron-sulfur</keyword>
<keyword id="KW-0479">Metal-binding</keyword>
<keyword id="KW-0496">Mitochondrion</keyword>
<keyword id="KW-1185">Reference proteome</keyword>
<keyword id="KW-0949">S-adenosyl-L-methionine</keyword>
<keyword id="KW-0808">Transferase</keyword>
<keyword id="KW-0809">Transit peptide</keyword>
<protein>
    <recommendedName>
        <fullName evidence="1">Lipoyl synthase, mitochondrial</fullName>
        <ecNumber evidence="1">2.8.1.8</ecNumber>
    </recommendedName>
    <alternativeName>
        <fullName evidence="1">Lipoate synthase</fullName>
        <shortName evidence="1">LS</shortName>
        <shortName evidence="1">Lip-syn</shortName>
    </alternativeName>
    <alternativeName>
        <fullName evidence="1">Lipoic acid synthase</fullName>
    </alternativeName>
</protein>
<reference key="1">
    <citation type="journal article" date="2012" name="MBio">
        <title>Comparative genome analysis of Trichophyton rubrum and related dermatophytes reveals candidate genes involved in infection.</title>
        <authorList>
            <person name="Martinez D.A."/>
            <person name="Oliver B.G."/>
            <person name="Graeser Y."/>
            <person name="Goldberg J.M."/>
            <person name="Li W."/>
            <person name="Martinez-Rossi N.M."/>
            <person name="Monod M."/>
            <person name="Shelest E."/>
            <person name="Barton R.C."/>
            <person name="Birch E."/>
            <person name="Brakhage A.A."/>
            <person name="Chen Z."/>
            <person name="Gurr S.J."/>
            <person name="Heiman D."/>
            <person name="Heitman J."/>
            <person name="Kosti I."/>
            <person name="Rossi A."/>
            <person name="Saif S."/>
            <person name="Samalova M."/>
            <person name="Saunders C.W."/>
            <person name="Shea T."/>
            <person name="Summerbell R.C."/>
            <person name="Xu J."/>
            <person name="Young S."/>
            <person name="Zeng Q."/>
            <person name="Birren B.W."/>
            <person name="Cuomo C.A."/>
            <person name="White T.C."/>
        </authorList>
    </citation>
    <scope>NUCLEOTIDE SEQUENCE [LARGE SCALE GENOMIC DNA]</scope>
    <source>
        <strain>ATCC MYA-4605 / CBS 113480</strain>
    </source>
</reference>
<organism>
    <name type="scientific">Arthroderma otae (strain ATCC MYA-4605 / CBS 113480)</name>
    <name type="common">Microsporum canis</name>
    <dbReference type="NCBI Taxonomy" id="554155"/>
    <lineage>
        <taxon>Eukaryota</taxon>
        <taxon>Fungi</taxon>
        <taxon>Dikarya</taxon>
        <taxon>Ascomycota</taxon>
        <taxon>Pezizomycotina</taxon>
        <taxon>Eurotiomycetes</taxon>
        <taxon>Eurotiomycetidae</taxon>
        <taxon>Onygenales</taxon>
        <taxon>Arthrodermataceae</taxon>
        <taxon>Microsporum</taxon>
    </lineage>
</organism>
<accession>C5FZJ2</accession>
<evidence type="ECO:0000255" key="1">
    <source>
        <dbReference type="HAMAP-Rule" id="MF_03123"/>
    </source>
</evidence>
<evidence type="ECO:0000255" key="2">
    <source>
        <dbReference type="PROSITE-ProRule" id="PRU01266"/>
    </source>
</evidence>
<evidence type="ECO:0000256" key="3">
    <source>
        <dbReference type="SAM" id="MobiDB-lite"/>
    </source>
</evidence>
<name>LIPA_ARTOC</name>
<dbReference type="EC" id="2.8.1.8" evidence="1"/>
<dbReference type="EMBL" id="DS995708">
    <property type="protein sequence ID" value="EEQ35295.1"/>
    <property type="molecule type" value="Genomic_DNA"/>
</dbReference>
<dbReference type="RefSeq" id="XP_002843031.1">
    <property type="nucleotide sequence ID" value="XM_002842985.1"/>
</dbReference>
<dbReference type="SMR" id="C5FZJ2"/>
<dbReference type="STRING" id="554155.C5FZJ2"/>
<dbReference type="GeneID" id="9226245"/>
<dbReference type="VEuPathDB" id="FungiDB:MCYG_08114"/>
<dbReference type="eggNOG" id="KOG2672">
    <property type="taxonomic scope" value="Eukaryota"/>
</dbReference>
<dbReference type="HOGENOM" id="CLU_033144_2_0_1"/>
<dbReference type="OMA" id="PYCDIDF"/>
<dbReference type="OrthoDB" id="3231at2759"/>
<dbReference type="UniPathway" id="UPA00538">
    <property type="reaction ID" value="UER00593"/>
</dbReference>
<dbReference type="Proteomes" id="UP000002035">
    <property type="component" value="Unassembled WGS sequence"/>
</dbReference>
<dbReference type="GO" id="GO:0005739">
    <property type="term" value="C:mitochondrion"/>
    <property type="evidence" value="ECO:0007669"/>
    <property type="project" value="UniProtKB-SubCell"/>
</dbReference>
<dbReference type="GO" id="GO:0051539">
    <property type="term" value="F:4 iron, 4 sulfur cluster binding"/>
    <property type="evidence" value="ECO:0007669"/>
    <property type="project" value="UniProtKB-UniRule"/>
</dbReference>
<dbReference type="GO" id="GO:0016992">
    <property type="term" value="F:lipoate synthase activity"/>
    <property type="evidence" value="ECO:0007669"/>
    <property type="project" value="UniProtKB-UniRule"/>
</dbReference>
<dbReference type="GO" id="GO:0046872">
    <property type="term" value="F:metal ion binding"/>
    <property type="evidence" value="ECO:0007669"/>
    <property type="project" value="UniProtKB-KW"/>
</dbReference>
<dbReference type="CDD" id="cd01335">
    <property type="entry name" value="Radical_SAM"/>
    <property type="match status" value="1"/>
</dbReference>
<dbReference type="FunFam" id="3.20.20.70:FF:000036">
    <property type="entry name" value="Lipoyl synthase, mitochondrial"/>
    <property type="match status" value="1"/>
</dbReference>
<dbReference type="Gene3D" id="3.20.20.70">
    <property type="entry name" value="Aldolase class I"/>
    <property type="match status" value="1"/>
</dbReference>
<dbReference type="HAMAP" id="MF_00206">
    <property type="entry name" value="Lipoyl_synth"/>
    <property type="match status" value="1"/>
</dbReference>
<dbReference type="InterPro" id="IPR013785">
    <property type="entry name" value="Aldolase_TIM"/>
</dbReference>
<dbReference type="InterPro" id="IPR006638">
    <property type="entry name" value="Elp3/MiaA/NifB-like_rSAM"/>
</dbReference>
<dbReference type="InterPro" id="IPR031691">
    <property type="entry name" value="LIAS_N"/>
</dbReference>
<dbReference type="InterPro" id="IPR003698">
    <property type="entry name" value="Lipoyl_synth"/>
</dbReference>
<dbReference type="InterPro" id="IPR007197">
    <property type="entry name" value="rSAM"/>
</dbReference>
<dbReference type="NCBIfam" id="TIGR00510">
    <property type="entry name" value="lipA"/>
    <property type="match status" value="1"/>
</dbReference>
<dbReference type="NCBIfam" id="NF004019">
    <property type="entry name" value="PRK05481.1"/>
    <property type="match status" value="1"/>
</dbReference>
<dbReference type="NCBIfam" id="NF009544">
    <property type="entry name" value="PRK12928.1"/>
    <property type="match status" value="1"/>
</dbReference>
<dbReference type="PANTHER" id="PTHR10949">
    <property type="entry name" value="LIPOYL SYNTHASE"/>
    <property type="match status" value="1"/>
</dbReference>
<dbReference type="PANTHER" id="PTHR10949:SF0">
    <property type="entry name" value="LIPOYL SYNTHASE, MITOCHONDRIAL"/>
    <property type="match status" value="1"/>
</dbReference>
<dbReference type="Pfam" id="PF16881">
    <property type="entry name" value="LIAS_N"/>
    <property type="match status" value="1"/>
</dbReference>
<dbReference type="Pfam" id="PF04055">
    <property type="entry name" value="Radical_SAM"/>
    <property type="match status" value="1"/>
</dbReference>
<dbReference type="SFLD" id="SFLDF00271">
    <property type="entry name" value="lipoyl_synthase"/>
    <property type="match status" value="1"/>
</dbReference>
<dbReference type="SFLD" id="SFLDG01058">
    <property type="entry name" value="lipoyl_synthase_like"/>
    <property type="match status" value="1"/>
</dbReference>
<dbReference type="SMART" id="SM00729">
    <property type="entry name" value="Elp3"/>
    <property type="match status" value="1"/>
</dbReference>
<dbReference type="SUPFAM" id="SSF102114">
    <property type="entry name" value="Radical SAM enzymes"/>
    <property type="match status" value="1"/>
</dbReference>
<dbReference type="PROSITE" id="PS51918">
    <property type="entry name" value="RADICAL_SAM"/>
    <property type="match status" value="1"/>
</dbReference>
<comment type="function">
    <text evidence="1">Catalyzes the radical-mediated insertion of two sulfur atoms into the C-6 and C-8 positions of the octanoyl moiety bound to the lipoyl domains of lipoate-dependent enzymes, thereby converting the octanoylated domains into lipoylated derivatives.</text>
</comment>
<comment type="catalytic activity">
    <reaction evidence="1">
        <text>[[Fe-S] cluster scaffold protein carrying a second [4Fe-4S](2+) cluster] + N(6)-octanoyl-L-lysyl-[protein] + 2 oxidized [2Fe-2S]-[ferredoxin] + 2 S-adenosyl-L-methionine + 4 H(+) = [[Fe-S] cluster scaffold protein] + N(6)-[(R)-dihydrolipoyl]-L-lysyl-[protein] + 4 Fe(3+) + 2 hydrogen sulfide + 2 5'-deoxyadenosine + 2 L-methionine + 2 reduced [2Fe-2S]-[ferredoxin]</text>
        <dbReference type="Rhea" id="RHEA:16585"/>
        <dbReference type="Rhea" id="RHEA-COMP:9928"/>
        <dbReference type="Rhea" id="RHEA-COMP:10000"/>
        <dbReference type="Rhea" id="RHEA-COMP:10001"/>
        <dbReference type="Rhea" id="RHEA-COMP:10475"/>
        <dbReference type="Rhea" id="RHEA-COMP:14568"/>
        <dbReference type="Rhea" id="RHEA-COMP:14569"/>
        <dbReference type="ChEBI" id="CHEBI:15378"/>
        <dbReference type="ChEBI" id="CHEBI:17319"/>
        <dbReference type="ChEBI" id="CHEBI:29034"/>
        <dbReference type="ChEBI" id="CHEBI:29919"/>
        <dbReference type="ChEBI" id="CHEBI:33722"/>
        <dbReference type="ChEBI" id="CHEBI:33737"/>
        <dbReference type="ChEBI" id="CHEBI:33738"/>
        <dbReference type="ChEBI" id="CHEBI:57844"/>
        <dbReference type="ChEBI" id="CHEBI:59789"/>
        <dbReference type="ChEBI" id="CHEBI:78809"/>
        <dbReference type="ChEBI" id="CHEBI:83100"/>
        <dbReference type="EC" id="2.8.1.8"/>
    </reaction>
</comment>
<comment type="cofactor">
    <cofactor evidence="1">
        <name>[4Fe-4S] cluster</name>
        <dbReference type="ChEBI" id="CHEBI:49883"/>
    </cofactor>
    <text evidence="1">Binds 2 [4Fe-4S] clusters per subunit. One cluster is coordinated with 3 cysteines and an exchangeable S-adenosyl-L-methionine.</text>
</comment>
<comment type="pathway">
    <text evidence="1">Protein modification; protein lipoylation via endogenous pathway; protein N(6)-(lipoyl)lysine from octanoyl-[acyl-carrier-protein]: step 2/2.</text>
</comment>
<comment type="subcellular location">
    <subcellularLocation>
        <location evidence="1">Mitochondrion</location>
    </subcellularLocation>
</comment>
<comment type="similarity">
    <text evidence="1">Belongs to the radical SAM superfamily. Lipoyl synthase family.</text>
</comment>
<proteinExistence type="inferred from homology"/>
<gene>
    <name type="ORF">MCYG_08114</name>
</gene>
<sequence>MASTTVCSAARIRVASSQVLRSIANTRTYATTSPESSIPETKPTAKRTPTTFKDKLNKGPSFSDFIGGATEPPLSPDEAYALKTALVGPAGKKKEITRLPSWLKTPIPDSSSYKKIKNDLRGLNLHTVCEEARCPNISECWGGGSKAAATATIMLMGDTCTRGCRFCSVKTSRTPPPLDPHEPENTAEALSRWGLGYVVLTAVDRDDLVDGGARHFAETVRRIKGKAPNILVECLTGDFSGDMEMVSLMAESGMDVFAHNVETVEALTPFVRDRRASFQQSLSVLRGAKAANPELITKTSLMLGLGETKEQVLDALKQLRASQVDVVTFGQYMRPTKRHMAVHEYVRPDVFDMWKEKAMEMGFLYCASGPLVRSSYKAGEAFIENVLKKRAKERIGGAVEDSVKGKDVLL</sequence>